<evidence type="ECO:0000255" key="1">
    <source>
        <dbReference type="PROSITE-ProRule" id="PRU00040"/>
    </source>
</evidence>
<evidence type="ECO:0000269" key="2">
    <source>
    </source>
</evidence>
<evidence type="ECO:0000269" key="3">
    <source>
    </source>
</evidence>
<evidence type="ECO:0000269" key="4">
    <source>
    </source>
</evidence>
<evidence type="ECO:0000305" key="5"/>
<evidence type="ECO:0007829" key="6">
    <source>
        <dbReference type="PDB" id="3GPR"/>
    </source>
</evidence>
<evidence type="ECO:0007829" key="7">
    <source>
        <dbReference type="PDB" id="5THP"/>
    </source>
</evidence>
<evidence type="ECO:0007829" key="8">
    <source>
        <dbReference type="PDB" id="6ND8"/>
    </source>
</evidence>
<comment type="function">
    <text evidence="2 3">Potent inhibitor of collagen-induced platelet aggregation. It acts by binding to the integrin alpha2A domain and blocks collagen binding to integrin alpha-2/beta-1 (ITGA2/ITGB1). The gamma/delta subunits mainly contribute to this activity.</text>
</comment>
<comment type="subunit">
    <text evidence="2 4">Heterotetramer of subunit alpha, beta, gamma and delta; only the gamma and the delta subunits are disulfide-linked. Alpha-beta heterodimer and gamma-delta heterodimer associate orthogonally, giving a cruciform conformation (PubMed:19369383). This heterotetramer may covalently dimerizes thanks to the gamma subunit (PubMed:11121411).</text>
</comment>
<comment type="subcellular location">
    <subcellularLocation>
        <location>Secreted</location>
    </subcellularLocation>
</comment>
<comment type="tissue specificity">
    <text>Expressed by the venom gland.</text>
</comment>
<comment type="similarity">
    <text evidence="5">Belongs to the snaclec family.</text>
</comment>
<name>SLEC_CALRH</name>
<protein>
    <recommendedName>
        <fullName>Snaclec rhodocetin subunit gamma</fullName>
    </recommendedName>
</protein>
<dbReference type="PDB" id="3GPR">
    <property type="method" value="X-ray"/>
    <property type="resolution" value="3.20 A"/>
    <property type="chains" value="C=2-135"/>
</dbReference>
<dbReference type="PDB" id="5THP">
    <property type="method" value="X-ray"/>
    <property type="resolution" value="3.01 A"/>
    <property type="chains" value="A/D/G/J/M/P=1-135"/>
</dbReference>
<dbReference type="PDB" id="6ND8">
    <property type="method" value="X-ray"/>
    <property type="resolution" value="2.90 A"/>
    <property type="chains" value="A/D/G/J/M/P=1-135"/>
</dbReference>
<dbReference type="PDB" id="6ND9">
    <property type="method" value="X-ray"/>
    <property type="resolution" value="2.90 A"/>
    <property type="chains" value="A/D/G/J/M/P=1-135"/>
</dbReference>
<dbReference type="PDB" id="6NDA">
    <property type="method" value="X-ray"/>
    <property type="resolution" value="3.15 A"/>
    <property type="chains" value="A/D/G/J/M/P=1-135"/>
</dbReference>
<dbReference type="PDB" id="6NDB">
    <property type="method" value="X-ray"/>
    <property type="resolution" value="3.20 A"/>
    <property type="chains" value="A/D/G/J/M/P=1-135"/>
</dbReference>
<dbReference type="PDB" id="6NDC">
    <property type="method" value="X-ray"/>
    <property type="resolution" value="3.35 A"/>
    <property type="chains" value="A/D/G/J/M/P=1-135"/>
</dbReference>
<dbReference type="PDB" id="6NDD">
    <property type="method" value="X-ray"/>
    <property type="resolution" value="3.05 A"/>
    <property type="chains" value="A/D/G/J/M/P=1-135"/>
</dbReference>
<dbReference type="PDB" id="6NDE">
    <property type="method" value="X-ray"/>
    <property type="resolution" value="3.50 A"/>
    <property type="chains" value="A/D/G/J/M/P=1-135"/>
</dbReference>
<dbReference type="PDB" id="6NDF">
    <property type="method" value="X-ray"/>
    <property type="resolution" value="3.05 A"/>
    <property type="chains" value="A/D/G/J/M/P=1-135"/>
</dbReference>
<dbReference type="PDB" id="6NDG">
    <property type="method" value="X-ray"/>
    <property type="resolution" value="3.15 A"/>
    <property type="chains" value="A/D/G/J/M/P=1-135"/>
</dbReference>
<dbReference type="PDB" id="6NDH">
    <property type="method" value="X-ray"/>
    <property type="resolution" value="2.90 A"/>
    <property type="chains" value="A/D/G/J/M/P=1-135"/>
</dbReference>
<dbReference type="PDBsum" id="3GPR"/>
<dbReference type="PDBsum" id="5THP"/>
<dbReference type="PDBsum" id="6ND8"/>
<dbReference type="PDBsum" id="6ND9"/>
<dbReference type="PDBsum" id="6NDA"/>
<dbReference type="PDBsum" id="6NDB"/>
<dbReference type="PDBsum" id="6NDC"/>
<dbReference type="PDBsum" id="6NDD"/>
<dbReference type="PDBsum" id="6NDE"/>
<dbReference type="PDBsum" id="6NDF"/>
<dbReference type="PDBsum" id="6NDG"/>
<dbReference type="PDBsum" id="6NDH"/>
<dbReference type="SMR" id="D2YW39"/>
<dbReference type="EvolutionaryTrace" id="D2YW39"/>
<dbReference type="GO" id="GO:0005576">
    <property type="term" value="C:extracellular region"/>
    <property type="evidence" value="ECO:0007669"/>
    <property type="project" value="UniProtKB-SubCell"/>
</dbReference>
<dbReference type="GO" id="GO:0090729">
    <property type="term" value="F:toxin activity"/>
    <property type="evidence" value="ECO:0007669"/>
    <property type="project" value="UniProtKB-KW"/>
</dbReference>
<dbReference type="FunFam" id="3.10.100.10:FF:000087">
    <property type="entry name" value="Snaclec rhodocetin subunit delta"/>
    <property type="match status" value="1"/>
</dbReference>
<dbReference type="Gene3D" id="3.10.100.10">
    <property type="entry name" value="Mannose-Binding Protein A, subunit A"/>
    <property type="match status" value="1"/>
</dbReference>
<dbReference type="InterPro" id="IPR001304">
    <property type="entry name" value="C-type_lectin-like"/>
</dbReference>
<dbReference type="InterPro" id="IPR016186">
    <property type="entry name" value="C-type_lectin-like/link_sf"/>
</dbReference>
<dbReference type="InterPro" id="IPR050111">
    <property type="entry name" value="C-type_lectin/snaclec_domain"/>
</dbReference>
<dbReference type="InterPro" id="IPR016187">
    <property type="entry name" value="CTDL_fold"/>
</dbReference>
<dbReference type="PANTHER" id="PTHR22803">
    <property type="entry name" value="MANNOSE, PHOSPHOLIPASE, LECTIN RECEPTOR RELATED"/>
    <property type="match status" value="1"/>
</dbReference>
<dbReference type="Pfam" id="PF00059">
    <property type="entry name" value="Lectin_C"/>
    <property type="match status" value="1"/>
</dbReference>
<dbReference type="SMART" id="SM00034">
    <property type="entry name" value="CLECT"/>
    <property type="match status" value="1"/>
</dbReference>
<dbReference type="SUPFAM" id="SSF56436">
    <property type="entry name" value="C-type lectin-like"/>
    <property type="match status" value="1"/>
</dbReference>
<dbReference type="PROSITE" id="PS50041">
    <property type="entry name" value="C_TYPE_LECTIN_2"/>
    <property type="match status" value="1"/>
</dbReference>
<sequence length="135" mass="15725">DFNCLPGWSAYDQHCYQAFNEPKTWDEAERFCTEQAKRGHLVSIGSDGEADFVAQLVTNNIKRPELYVWIGLRDRRKEQQCSSEWSMSASIIYVNWNTGESQMCQGLARWTGFRKWDYSDCQAKNPFVCKFPSEC</sequence>
<proteinExistence type="evidence at protein level"/>
<organism>
    <name type="scientific">Calloselasma rhodostoma</name>
    <name type="common">Malayan pit viper</name>
    <name type="synonym">Agkistrodon rhodostoma</name>
    <dbReference type="NCBI Taxonomy" id="8717"/>
    <lineage>
        <taxon>Eukaryota</taxon>
        <taxon>Metazoa</taxon>
        <taxon>Chordata</taxon>
        <taxon>Craniata</taxon>
        <taxon>Vertebrata</taxon>
        <taxon>Euteleostomi</taxon>
        <taxon>Lepidosauria</taxon>
        <taxon>Squamata</taxon>
        <taxon>Bifurcata</taxon>
        <taxon>Unidentata</taxon>
        <taxon>Episquamata</taxon>
        <taxon>Toxicofera</taxon>
        <taxon>Serpentes</taxon>
        <taxon>Colubroidea</taxon>
        <taxon>Viperidae</taxon>
        <taxon>Crotalinae</taxon>
        <taxon>Calloselasma</taxon>
    </lineage>
</organism>
<keyword id="KW-0002">3D-structure</keyword>
<keyword id="KW-0903">Direct protein sequencing</keyword>
<keyword id="KW-1015">Disulfide bond</keyword>
<keyword id="KW-1199">Hemostasis impairing toxin</keyword>
<keyword id="KW-1201">Platelet aggregation inhibiting toxin</keyword>
<keyword id="KW-0964">Secreted</keyword>
<keyword id="KW-0800">Toxin</keyword>
<accession>D2YW39</accession>
<feature type="chain" id="PRO_0000422610" description="Snaclec rhodocetin subunit gamma">
    <location>
        <begin position="2"/>
        <end position="135"/>
    </location>
</feature>
<feature type="domain" description="C-type lectin" evidence="1">
    <location>
        <begin position="11"/>
        <end position="130"/>
    </location>
</feature>
<feature type="disulfide bond" evidence="1 4">
    <location>
        <begin position="4"/>
        <end position="15"/>
    </location>
</feature>
<feature type="disulfide bond" evidence="1 4">
    <location>
        <begin position="32"/>
        <end position="129"/>
    </location>
</feature>
<feature type="disulfide bond" description="Interchain (with C-74 in subunit delta of heterotetrameric partner)" evidence="1 4">
    <location>
        <position position="81"/>
    </location>
</feature>
<feature type="disulfide bond" evidence="1 4">
    <location>
        <begin position="104"/>
        <end position="121"/>
    </location>
</feature>
<feature type="disulfide bond" description="Interchain (with C-135 in subunit gamma of octameric partner)" evidence="1 4">
    <location>
        <position position="135"/>
    </location>
</feature>
<feature type="unsure residue" description="Assigned by comparison with orthologs">
    <location>
        <position position="41"/>
    </location>
</feature>
<feature type="unsure residue" description="Assigned by comparison with orthologs">
    <location>
        <position position="44"/>
    </location>
</feature>
<feature type="unsure residue" description="Assigned by comparison with orthologs">
    <location>
        <position position="56"/>
    </location>
</feature>
<feature type="unsure residue" description="Assigned by comparison with orthologs">
    <location>
        <position position="61"/>
    </location>
</feature>
<feature type="unsure residue" description="Assigned by comparison with orthologs">
    <location>
        <position position="66"/>
    </location>
</feature>
<feature type="unsure residue" description="Assigned by comparison with orthologs">
    <location>
        <position position="70"/>
    </location>
</feature>
<feature type="unsure residue" description="Assigned by comparison with orthologs">
    <location>
        <position position="72"/>
    </location>
</feature>
<feature type="unsure residue" description="Assigned by comparison with orthologs">
    <location>
        <position position="91"/>
    </location>
</feature>
<feature type="unsure residue" description="Assigned by comparison with orthologs">
    <location>
        <position position="92"/>
    </location>
</feature>
<feature type="unsure residue" description="Assigned by comparison with orthologs">
    <location>
        <position position="107"/>
    </location>
</feature>
<feature type="sequence conflict" description="In Ref. 1; AA sequence." evidence="5" ref="1">
    <location>
        <position position="1"/>
    </location>
</feature>
<feature type="sequence conflict" description="In Ref. 1; AA sequence." evidence="5" ref="1">
    <original>P</original>
    <variation>S</variation>
    <location>
        <position position="132"/>
    </location>
</feature>
<feature type="non-terminal residue">
    <location>
        <position position="1"/>
    </location>
</feature>
<feature type="strand" evidence="8">
    <location>
        <begin position="9"/>
        <end position="11"/>
    </location>
</feature>
<feature type="strand" evidence="8">
    <location>
        <begin position="14"/>
        <end position="23"/>
    </location>
</feature>
<feature type="helix" evidence="8">
    <location>
        <begin position="25"/>
        <end position="34"/>
    </location>
</feature>
<feature type="strand" evidence="6">
    <location>
        <begin position="35"/>
        <end position="37"/>
    </location>
</feature>
<feature type="helix" evidence="8">
    <location>
        <begin position="47"/>
        <end position="60"/>
    </location>
</feature>
<feature type="strand" evidence="8">
    <location>
        <begin position="66"/>
        <end position="74"/>
    </location>
</feature>
<feature type="strand" evidence="8">
    <location>
        <begin position="76"/>
        <end position="81"/>
    </location>
</feature>
<feature type="strand" evidence="7">
    <location>
        <begin position="86"/>
        <end position="88"/>
    </location>
</feature>
<feature type="strand" evidence="6">
    <location>
        <begin position="96"/>
        <end position="98"/>
    </location>
</feature>
<feature type="strand" evidence="8">
    <location>
        <begin position="104"/>
        <end position="108"/>
    </location>
</feature>
<feature type="helix" evidence="8">
    <location>
        <begin position="109"/>
        <end position="111"/>
    </location>
</feature>
<feature type="turn" evidence="8">
    <location>
        <begin position="112"/>
        <end position="114"/>
    </location>
</feature>
<feature type="strand" evidence="8">
    <location>
        <begin position="115"/>
        <end position="119"/>
    </location>
</feature>
<feature type="strand" evidence="8">
    <location>
        <begin position="125"/>
        <end position="132"/>
    </location>
</feature>
<reference key="1">
    <citation type="journal article" date="2009" name="FASEB J.">
        <title>The alpha2beta1 integrin-specific antagonist rhodocetin is a cruciform, heterotetrameric molecule.</title>
        <authorList>
            <person name="Eble J.A."/>
            <person name="Niland S."/>
            <person name="Bracht T."/>
            <person name="Mormann M."/>
            <person name="Peter-Katalinic J."/>
            <person name="Pohlentz G."/>
            <person name="Stetefeld J."/>
        </authorList>
    </citation>
    <scope>PROTEIN SEQUENCE</scope>
    <scope>SUBUNIT</scope>
    <scope>DISULFIDE BONDS</scope>
    <scope>IDENTIFICATION BY MASS SPECTROMETRY</scope>
    <scope>X-RAY CRYSTALLOGRAPHY (3.2 ANGSTROMS) OF HETEROTETRAMER</scope>
    <source>
        <tissue>Venom</tissue>
    </source>
</reference>
<reference key="2">
    <citation type="journal article" date="2001" name="J. Biol. Chem.">
        <title>alpha 2beta 1 integrin is not recognized by rhodocytin but is the specific, high affinity target of rhodocetin, an RGD-independent disintegrin and potent inhibitor of cell adhesion to collagen.</title>
        <authorList>
            <person name="Eble J.A."/>
            <person name="Beermann B."/>
            <person name="Hinz H.J."/>
            <person name="Schmidt-Hederich A."/>
        </authorList>
    </citation>
    <scope>FUNCTION</scope>
</reference>
<reference key="3">
    <citation type="journal article" date="2003" name="Biochem. J.">
        <title>The alpha2beta1 integrin inhibitor rhodocetin binds to the A-domain of the integrin alpha2 subunit proximal to the collagen-binding site.</title>
        <authorList>
            <person name="Eble J.A."/>
            <person name="Tuckwell D.S."/>
        </authorList>
    </citation>
    <scope>FUNCTION</scope>
</reference>